<sequence>MPAELSPIDTAKFAAARRAVDLVQDGMKLGLGTGSTAAWMVRCLAERVREEGLRVQGVPTSTRTAELARALGIQVVTLDEAKWLDLTIDGADEFDADFNLIKGGGAALLQEKIVATASDRMVVIADAAKEVAHLGAFPLPVEVIPFGWQSTKMLIEETLEGMDVLGREVTLRLSGDAPLLTDEKNYILDLHLKRIGEPRPLALALNQIAGVVENGLFIDICDTVVVGHGDGRVSLRDLQSGQAEEGSIDMDRARNIFADLGD</sequence>
<gene>
    <name evidence="1" type="primary">rpiA</name>
    <name type="ordered locus">RHOS4_19650</name>
    <name type="ORF">RSP_0359</name>
</gene>
<protein>
    <recommendedName>
        <fullName evidence="1">Ribose-5-phosphate isomerase A</fullName>
        <ecNumber evidence="1">5.3.1.6</ecNumber>
    </recommendedName>
    <alternativeName>
        <fullName evidence="1">Phosphoriboisomerase A</fullName>
        <shortName evidence="1">PRI</shortName>
    </alternativeName>
</protein>
<keyword id="KW-0413">Isomerase</keyword>
<keyword id="KW-1185">Reference proteome</keyword>
<evidence type="ECO:0000255" key="1">
    <source>
        <dbReference type="HAMAP-Rule" id="MF_00170"/>
    </source>
</evidence>
<dbReference type="EC" id="5.3.1.6" evidence="1"/>
<dbReference type="EMBL" id="CP000143">
    <property type="protein sequence ID" value="ABA79533.1"/>
    <property type="molecule type" value="Genomic_DNA"/>
</dbReference>
<dbReference type="RefSeq" id="WP_011338176.1">
    <property type="nucleotide sequence ID" value="NC_007493.2"/>
</dbReference>
<dbReference type="RefSeq" id="YP_353434.1">
    <property type="nucleotide sequence ID" value="NC_007493.2"/>
</dbReference>
<dbReference type="SMR" id="Q3J101"/>
<dbReference type="STRING" id="272943.RSP_0359"/>
<dbReference type="EnsemblBacteria" id="ABA79533">
    <property type="protein sequence ID" value="ABA79533"/>
    <property type="gene ID" value="RSP_0359"/>
</dbReference>
<dbReference type="GeneID" id="3718982"/>
<dbReference type="KEGG" id="rsp:RSP_0359"/>
<dbReference type="PATRIC" id="fig|272943.9.peg.2304"/>
<dbReference type="eggNOG" id="COG0120">
    <property type="taxonomic scope" value="Bacteria"/>
</dbReference>
<dbReference type="OrthoDB" id="5870696at2"/>
<dbReference type="PhylomeDB" id="Q3J101"/>
<dbReference type="UniPathway" id="UPA00115">
    <property type="reaction ID" value="UER00412"/>
</dbReference>
<dbReference type="Proteomes" id="UP000002703">
    <property type="component" value="Chromosome 1"/>
</dbReference>
<dbReference type="GO" id="GO:0005829">
    <property type="term" value="C:cytosol"/>
    <property type="evidence" value="ECO:0007669"/>
    <property type="project" value="TreeGrafter"/>
</dbReference>
<dbReference type="GO" id="GO:0004751">
    <property type="term" value="F:ribose-5-phosphate isomerase activity"/>
    <property type="evidence" value="ECO:0007669"/>
    <property type="project" value="UniProtKB-UniRule"/>
</dbReference>
<dbReference type="GO" id="GO:0006014">
    <property type="term" value="P:D-ribose metabolic process"/>
    <property type="evidence" value="ECO:0007669"/>
    <property type="project" value="TreeGrafter"/>
</dbReference>
<dbReference type="GO" id="GO:0009052">
    <property type="term" value="P:pentose-phosphate shunt, non-oxidative branch"/>
    <property type="evidence" value="ECO:0007669"/>
    <property type="project" value="UniProtKB-UniRule"/>
</dbReference>
<dbReference type="CDD" id="cd01398">
    <property type="entry name" value="RPI_A"/>
    <property type="match status" value="1"/>
</dbReference>
<dbReference type="FunFam" id="3.40.50.1360:FF:000001">
    <property type="entry name" value="Ribose-5-phosphate isomerase A"/>
    <property type="match status" value="1"/>
</dbReference>
<dbReference type="Gene3D" id="3.30.70.260">
    <property type="match status" value="1"/>
</dbReference>
<dbReference type="Gene3D" id="3.40.50.1360">
    <property type="match status" value="1"/>
</dbReference>
<dbReference type="HAMAP" id="MF_00170">
    <property type="entry name" value="Rib_5P_isom_A"/>
    <property type="match status" value="1"/>
</dbReference>
<dbReference type="InterPro" id="IPR037171">
    <property type="entry name" value="NagB/RpiA_transferase-like"/>
</dbReference>
<dbReference type="InterPro" id="IPR020672">
    <property type="entry name" value="Ribose5P_isomerase_typA_subgr"/>
</dbReference>
<dbReference type="InterPro" id="IPR004788">
    <property type="entry name" value="Ribose5P_isomerase_type_A"/>
</dbReference>
<dbReference type="NCBIfam" id="NF001924">
    <property type="entry name" value="PRK00702.1"/>
    <property type="match status" value="1"/>
</dbReference>
<dbReference type="NCBIfam" id="TIGR00021">
    <property type="entry name" value="rpiA"/>
    <property type="match status" value="1"/>
</dbReference>
<dbReference type="PANTHER" id="PTHR11934">
    <property type="entry name" value="RIBOSE-5-PHOSPHATE ISOMERASE"/>
    <property type="match status" value="1"/>
</dbReference>
<dbReference type="PANTHER" id="PTHR11934:SF0">
    <property type="entry name" value="RIBOSE-5-PHOSPHATE ISOMERASE"/>
    <property type="match status" value="1"/>
</dbReference>
<dbReference type="Pfam" id="PF06026">
    <property type="entry name" value="Rib_5-P_isom_A"/>
    <property type="match status" value="1"/>
</dbReference>
<dbReference type="SUPFAM" id="SSF75445">
    <property type="entry name" value="D-ribose-5-phosphate isomerase (RpiA), lid domain"/>
    <property type="match status" value="1"/>
</dbReference>
<dbReference type="SUPFAM" id="SSF100950">
    <property type="entry name" value="NagB/RpiA/CoA transferase-like"/>
    <property type="match status" value="1"/>
</dbReference>
<feature type="chain" id="PRO_1000016980" description="Ribose-5-phosphate isomerase A">
    <location>
        <begin position="1"/>
        <end position="262"/>
    </location>
</feature>
<feature type="active site" description="Proton acceptor" evidence="1">
    <location>
        <position position="111"/>
    </location>
</feature>
<feature type="binding site" evidence="1">
    <location>
        <begin position="33"/>
        <end position="36"/>
    </location>
    <ligand>
        <name>substrate</name>
    </ligand>
</feature>
<feature type="binding site" evidence="1">
    <location>
        <begin position="89"/>
        <end position="92"/>
    </location>
    <ligand>
        <name>substrate</name>
    </ligand>
</feature>
<feature type="binding site" evidence="1">
    <location>
        <begin position="102"/>
        <end position="105"/>
    </location>
    <ligand>
        <name>substrate</name>
    </ligand>
</feature>
<feature type="binding site" evidence="1">
    <location>
        <position position="129"/>
    </location>
    <ligand>
        <name>substrate</name>
    </ligand>
</feature>
<name>RPIA_CERS4</name>
<accession>Q3J101</accession>
<comment type="function">
    <text evidence="1">Catalyzes the reversible conversion of ribose-5-phosphate to ribulose 5-phosphate.</text>
</comment>
<comment type="catalytic activity">
    <reaction evidence="1">
        <text>aldehydo-D-ribose 5-phosphate = D-ribulose 5-phosphate</text>
        <dbReference type="Rhea" id="RHEA:14657"/>
        <dbReference type="ChEBI" id="CHEBI:58121"/>
        <dbReference type="ChEBI" id="CHEBI:58273"/>
        <dbReference type="EC" id="5.3.1.6"/>
    </reaction>
</comment>
<comment type="pathway">
    <text evidence="1">Carbohydrate degradation; pentose phosphate pathway; D-ribose 5-phosphate from D-ribulose 5-phosphate (non-oxidative stage): step 1/1.</text>
</comment>
<comment type="subunit">
    <text evidence="1">Homodimer.</text>
</comment>
<comment type="similarity">
    <text evidence="1">Belongs to the ribose 5-phosphate isomerase family.</text>
</comment>
<organism>
    <name type="scientific">Cereibacter sphaeroides (strain ATCC 17023 / DSM 158 / JCM 6121 / CCUG 31486 / LMG 2827 / NBRC 12203 / NCIMB 8253 / ATH 2.4.1.)</name>
    <name type="common">Rhodobacter sphaeroides</name>
    <dbReference type="NCBI Taxonomy" id="272943"/>
    <lineage>
        <taxon>Bacteria</taxon>
        <taxon>Pseudomonadati</taxon>
        <taxon>Pseudomonadota</taxon>
        <taxon>Alphaproteobacteria</taxon>
        <taxon>Rhodobacterales</taxon>
        <taxon>Paracoccaceae</taxon>
        <taxon>Cereibacter</taxon>
    </lineage>
</organism>
<reference key="1">
    <citation type="submission" date="2005-09" db="EMBL/GenBank/DDBJ databases">
        <title>Complete sequence of chromosome 1 of Rhodobacter sphaeroides 2.4.1.</title>
        <authorList>
            <person name="Copeland A."/>
            <person name="Lucas S."/>
            <person name="Lapidus A."/>
            <person name="Barry K."/>
            <person name="Detter J.C."/>
            <person name="Glavina T."/>
            <person name="Hammon N."/>
            <person name="Israni S."/>
            <person name="Pitluck S."/>
            <person name="Richardson P."/>
            <person name="Mackenzie C."/>
            <person name="Choudhary M."/>
            <person name="Larimer F."/>
            <person name="Hauser L.J."/>
            <person name="Land M."/>
            <person name="Donohue T.J."/>
            <person name="Kaplan S."/>
        </authorList>
    </citation>
    <scope>NUCLEOTIDE SEQUENCE [LARGE SCALE GENOMIC DNA]</scope>
    <source>
        <strain>ATCC 17023 / DSM 158 / JCM 6121 / CCUG 31486 / LMG 2827 / NBRC 12203 / NCIMB 8253 / ATH 2.4.1.</strain>
    </source>
</reference>
<proteinExistence type="inferred from homology"/>